<reference key="1">
    <citation type="journal article" date="2006" name="J. Bacteriol.">
        <title>The genome of the obligately intracellular bacterium Ehrlichia canis reveals themes of complex membrane structure and immune evasion strategies.</title>
        <authorList>
            <person name="Mavromatis K."/>
            <person name="Doyle C.K."/>
            <person name="Lykidis A."/>
            <person name="Ivanova N."/>
            <person name="Francino M.P."/>
            <person name="Chain P."/>
            <person name="Shin M."/>
            <person name="Malfatti S."/>
            <person name="Larimer F."/>
            <person name="Copeland A."/>
            <person name="Detter J.C."/>
            <person name="Land M."/>
            <person name="Richardson P.M."/>
            <person name="Yu X.J."/>
            <person name="Walker D.H."/>
            <person name="McBride J.W."/>
            <person name="Kyrpides N.C."/>
        </authorList>
    </citation>
    <scope>NUCLEOTIDE SEQUENCE [LARGE SCALE GENOMIC DNA]</scope>
    <source>
        <strain>Jake</strain>
    </source>
</reference>
<keyword id="KW-0030">Aminoacyl-tRNA synthetase</keyword>
<keyword id="KW-0067">ATP-binding</keyword>
<keyword id="KW-0963">Cytoplasm</keyword>
<keyword id="KW-0436">Ligase</keyword>
<keyword id="KW-0547">Nucleotide-binding</keyword>
<keyword id="KW-0648">Protein biosynthesis</keyword>
<proteinExistence type="inferred from homology"/>
<feature type="chain" id="PRO_0000237360" description="Glutamate--tRNA ligase 1">
    <location>
        <begin position="1"/>
        <end position="469"/>
    </location>
</feature>
<feature type="short sequence motif" description="'HIGH' region" evidence="1">
    <location>
        <begin position="11"/>
        <end position="21"/>
    </location>
</feature>
<feature type="short sequence motif" description="'KMSKS' region" evidence="1">
    <location>
        <begin position="238"/>
        <end position="242"/>
    </location>
</feature>
<feature type="binding site" evidence="1">
    <location>
        <position position="241"/>
    </location>
    <ligand>
        <name>ATP</name>
        <dbReference type="ChEBI" id="CHEBI:30616"/>
    </ligand>
</feature>
<dbReference type="EC" id="6.1.1.17" evidence="1"/>
<dbReference type="EMBL" id="CP000107">
    <property type="protein sequence ID" value="AAZ68474.1"/>
    <property type="molecule type" value="Genomic_DNA"/>
</dbReference>
<dbReference type="RefSeq" id="WP_011304552.1">
    <property type="nucleotide sequence ID" value="NC_007354.1"/>
</dbReference>
<dbReference type="SMR" id="Q3YS31"/>
<dbReference type="FunCoup" id="Q3YS31">
    <property type="interactions" value="342"/>
</dbReference>
<dbReference type="STRING" id="269484.Ecaj_0432"/>
<dbReference type="KEGG" id="ecn:Ecaj_0432"/>
<dbReference type="eggNOG" id="COG0008">
    <property type="taxonomic scope" value="Bacteria"/>
</dbReference>
<dbReference type="HOGENOM" id="CLU_015768_6_0_5"/>
<dbReference type="InParanoid" id="Q3YS31"/>
<dbReference type="Proteomes" id="UP000000435">
    <property type="component" value="Chromosome"/>
</dbReference>
<dbReference type="GO" id="GO:0005829">
    <property type="term" value="C:cytosol"/>
    <property type="evidence" value="ECO:0007669"/>
    <property type="project" value="TreeGrafter"/>
</dbReference>
<dbReference type="GO" id="GO:0005524">
    <property type="term" value="F:ATP binding"/>
    <property type="evidence" value="ECO:0007669"/>
    <property type="project" value="UniProtKB-UniRule"/>
</dbReference>
<dbReference type="GO" id="GO:0004818">
    <property type="term" value="F:glutamate-tRNA ligase activity"/>
    <property type="evidence" value="ECO:0007669"/>
    <property type="project" value="UniProtKB-UniRule"/>
</dbReference>
<dbReference type="GO" id="GO:0000049">
    <property type="term" value="F:tRNA binding"/>
    <property type="evidence" value="ECO:0007669"/>
    <property type="project" value="InterPro"/>
</dbReference>
<dbReference type="GO" id="GO:0008270">
    <property type="term" value="F:zinc ion binding"/>
    <property type="evidence" value="ECO:0007669"/>
    <property type="project" value="InterPro"/>
</dbReference>
<dbReference type="GO" id="GO:0006424">
    <property type="term" value="P:glutamyl-tRNA aminoacylation"/>
    <property type="evidence" value="ECO:0007669"/>
    <property type="project" value="UniProtKB-UniRule"/>
</dbReference>
<dbReference type="CDD" id="cd00808">
    <property type="entry name" value="GluRS_core"/>
    <property type="match status" value="1"/>
</dbReference>
<dbReference type="FunFam" id="3.40.50.620:FF:000007">
    <property type="entry name" value="Glutamate--tRNA ligase"/>
    <property type="match status" value="1"/>
</dbReference>
<dbReference type="Gene3D" id="1.10.10.350">
    <property type="match status" value="1"/>
</dbReference>
<dbReference type="Gene3D" id="3.40.50.620">
    <property type="entry name" value="HUPs"/>
    <property type="match status" value="1"/>
</dbReference>
<dbReference type="HAMAP" id="MF_00022">
    <property type="entry name" value="Glu_tRNA_synth_type1"/>
    <property type="match status" value="1"/>
</dbReference>
<dbReference type="InterPro" id="IPR045462">
    <property type="entry name" value="aa-tRNA-synth_I_cd-bd"/>
</dbReference>
<dbReference type="InterPro" id="IPR020751">
    <property type="entry name" value="aa-tRNA-synth_I_codon-bd_sub2"/>
</dbReference>
<dbReference type="InterPro" id="IPR001412">
    <property type="entry name" value="aa-tRNA-synth_I_CS"/>
</dbReference>
<dbReference type="InterPro" id="IPR008925">
    <property type="entry name" value="aa_tRNA-synth_I_cd-bd_sf"/>
</dbReference>
<dbReference type="InterPro" id="IPR004527">
    <property type="entry name" value="Glu-tRNA-ligase_bac/mito"/>
</dbReference>
<dbReference type="InterPro" id="IPR000924">
    <property type="entry name" value="Glu/Gln-tRNA-synth"/>
</dbReference>
<dbReference type="InterPro" id="IPR020058">
    <property type="entry name" value="Glu/Gln-tRNA-synth_Ib_cat-dom"/>
</dbReference>
<dbReference type="InterPro" id="IPR049940">
    <property type="entry name" value="GluQ/Sye"/>
</dbReference>
<dbReference type="InterPro" id="IPR033910">
    <property type="entry name" value="GluRS_core"/>
</dbReference>
<dbReference type="InterPro" id="IPR014729">
    <property type="entry name" value="Rossmann-like_a/b/a_fold"/>
</dbReference>
<dbReference type="NCBIfam" id="TIGR00464">
    <property type="entry name" value="gltX_bact"/>
    <property type="match status" value="1"/>
</dbReference>
<dbReference type="PANTHER" id="PTHR43311">
    <property type="entry name" value="GLUTAMATE--TRNA LIGASE"/>
    <property type="match status" value="1"/>
</dbReference>
<dbReference type="PANTHER" id="PTHR43311:SF2">
    <property type="entry name" value="GLUTAMATE--TRNA LIGASE, MITOCHONDRIAL-RELATED"/>
    <property type="match status" value="1"/>
</dbReference>
<dbReference type="Pfam" id="PF19269">
    <property type="entry name" value="Anticodon_2"/>
    <property type="match status" value="1"/>
</dbReference>
<dbReference type="Pfam" id="PF00749">
    <property type="entry name" value="tRNA-synt_1c"/>
    <property type="match status" value="1"/>
</dbReference>
<dbReference type="PRINTS" id="PR00987">
    <property type="entry name" value="TRNASYNTHGLU"/>
</dbReference>
<dbReference type="SUPFAM" id="SSF48163">
    <property type="entry name" value="An anticodon-binding domain of class I aminoacyl-tRNA synthetases"/>
    <property type="match status" value="1"/>
</dbReference>
<dbReference type="SUPFAM" id="SSF52374">
    <property type="entry name" value="Nucleotidylyl transferase"/>
    <property type="match status" value="1"/>
</dbReference>
<dbReference type="PROSITE" id="PS00178">
    <property type="entry name" value="AA_TRNA_LIGASE_I"/>
    <property type="match status" value="1"/>
</dbReference>
<protein>
    <recommendedName>
        <fullName evidence="1">Glutamate--tRNA ligase 1</fullName>
        <ecNumber evidence="1">6.1.1.17</ecNumber>
    </recommendedName>
    <alternativeName>
        <fullName evidence="1">Glutamyl-tRNA synthetase 1</fullName>
        <shortName evidence="1">GluRS 1</shortName>
    </alternativeName>
</protein>
<name>SYE1_EHRCJ</name>
<organism>
    <name type="scientific">Ehrlichia canis (strain Jake)</name>
    <dbReference type="NCBI Taxonomy" id="269484"/>
    <lineage>
        <taxon>Bacteria</taxon>
        <taxon>Pseudomonadati</taxon>
        <taxon>Pseudomonadota</taxon>
        <taxon>Alphaproteobacteria</taxon>
        <taxon>Rickettsiales</taxon>
        <taxon>Anaplasmataceae</taxon>
        <taxon>Ehrlichia</taxon>
    </lineage>
</organism>
<comment type="function">
    <text evidence="1">Catalyzes the attachment of glutamate to tRNA(Glu) in a two-step reaction: glutamate is first activated by ATP to form Glu-AMP and then transferred to the acceptor end of tRNA(Glu).</text>
</comment>
<comment type="catalytic activity">
    <reaction evidence="1">
        <text>tRNA(Glu) + L-glutamate + ATP = L-glutamyl-tRNA(Glu) + AMP + diphosphate</text>
        <dbReference type="Rhea" id="RHEA:23540"/>
        <dbReference type="Rhea" id="RHEA-COMP:9663"/>
        <dbReference type="Rhea" id="RHEA-COMP:9680"/>
        <dbReference type="ChEBI" id="CHEBI:29985"/>
        <dbReference type="ChEBI" id="CHEBI:30616"/>
        <dbReference type="ChEBI" id="CHEBI:33019"/>
        <dbReference type="ChEBI" id="CHEBI:78442"/>
        <dbReference type="ChEBI" id="CHEBI:78520"/>
        <dbReference type="ChEBI" id="CHEBI:456215"/>
        <dbReference type="EC" id="6.1.1.17"/>
    </reaction>
</comment>
<comment type="subunit">
    <text evidence="1">Monomer.</text>
</comment>
<comment type="subcellular location">
    <subcellularLocation>
        <location evidence="1">Cytoplasm</location>
    </subcellularLocation>
</comment>
<comment type="similarity">
    <text evidence="1">Belongs to the class-I aminoacyl-tRNA synthetase family. Glutamate--tRNA ligase type 1 subfamily.</text>
</comment>
<evidence type="ECO:0000255" key="1">
    <source>
        <dbReference type="HAMAP-Rule" id="MF_00022"/>
    </source>
</evidence>
<gene>
    <name evidence="1" type="primary">gltX1</name>
    <name type="ordered locus">Ecaj_0432</name>
</gene>
<sequence length="469" mass="53980">MSHDVITRFAPSPTGHLHLGGARTALFNWLYAKHNNGKFLLRIEDTDKKRSSQELIDSIINAMSWLKIHYDGKAVLQSENISRHVEIANQLMLNNKAYYCYCSEEEINKEKEESAKKGLYYKHNCIWKNKSAPNSNITRVVRLKSPTDGVTSFDDEVYGNITVNNSQLDDMILLRSDNTPTYLLSVVVDDHDMNISHIIRGTDHLTNTARQLLIYNALEWDPPKFAHIPLIHDENGNKLSKRHQAIGIHEYKNSGILPEAIFNYLLRMGWSHENDEVITIDQAIRWFSIEGIGQSPSRLDSKKLEFLNNHYINITDNETILNMIIPIIEEKTGHIITDVKKGYLLKGLSELKKRTKNLVNLAKESLFYVEDIPISIDQESITVIKDYKHIFSILYDNLSKISEKDWNHNILMSIIKDISCNLEVKISIVYHCLRASITGRMNAPSIIEIMINLQHKECLQRIKYALDVI</sequence>
<accession>Q3YS31</accession>